<sequence length="80" mass="8372">GSQFGKGKGQLIGVGAGALLGAILGNQIGAGMDEQDRRLAELTSQRALETTPSGTSIEWRNPDNGNYGYVTPSKTYKNST</sequence>
<protein>
    <recommendedName>
        <fullName>17 kDa surface antigen</fullName>
    </recommendedName>
</protein>
<name>17KD_RICCA</name>
<feature type="chain" id="PRO_0000096159" description="17 kDa surface antigen">
    <location>
        <begin position="1" status="less than"/>
        <end position="80" status="greater than"/>
    </location>
</feature>
<feature type="region of interest" description="Disordered" evidence="1">
    <location>
        <begin position="47"/>
        <end position="80"/>
    </location>
</feature>
<feature type="compositionally biased region" description="Polar residues" evidence="1">
    <location>
        <begin position="47"/>
        <end position="58"/>
    </location>
</feature>
<feature type="non-terminal residue">
    <location>
        <position position="1"/>
    </location>
</feature>
<feature type="non-terminal residue">
    <location>
        <position position="80"/>
    </location>
</feature>
<proteinExistence type="inferred from homology"/>
<gene>
    <name type="primary">omp</name>
</gene>
<organism>
    <name type="scientific">Rickettsia canadensis</name>
    <dbReference type="NCBI Taxonomy" id="788"/>
    <lineage>
        <taxon>Bacteria</taxon>
        <taxon>Pseudomonadati</taxon>
        <taxon>Pseudomonadota</taxon>
        <taxon>Alphaproteobacteria</taxon>
        <taxon>Rickettsiales</taxon>
        <taxon>Rickettsiaceae</taxon>
        <taxon>Rickettsieae</taxon>
        <taxon>Rickettsia</taxon>
        <taxon>belli group</taxon>
    </lineage>
</organism>
<dbReference type="EMBL" id="M82879">
    <property type="status" value="NOT_ANNOTATED_CDS"/>
    <property type="molecule type" value="Genomic_DNA"/>
</dbReference>
<dbReference type="GO" id="GO:0009279">
    <property type="term" value="C:cell outer membrane"/>
    <property type="evidence" value="ECO:0007669"/>
    <property type="project" value="UniProtKB-SubCell"/>
</dbReference>
<dbReference type="InterPro" id="IPR008816">
    <property type="entry name" value="Gly_zipper_2TM_dom"/>
</dbReference>
<dbReference type="Pfam" id="PF05433">
    <property type="entry name" value="Rick_17kDa_Anti"/>
    <property type="match status" value="1"/>
</dbReference>
<evidence type="ECO:0000256" key="1">
    <source>
        <dbReference type="SAM" id="MobiDB-lite"/>
    </source>
</evidence>
<evidence type="ECO:0000305" key="2"/>
<accession>P29697</accession>
<keyword id="KW-0998">Cell outer membrane</keyword>
<keyword id="KW-0449">Lipoprotein</keyword>
<keyword id="KW-0472">Membrane</keyword>
<comment type="subcellular location">
    <subcellularLocation>
        <location evidence="2">Cell outer membrane</location>
        <topology evidence="2">Lipid-anchor</topology>
    </subcellularLocation>
</comment>
<comment type="similarity">
    <text evidence="2">Belongs to the rickettsiale 17 kDa surface antigen family.</text>
</comment>
<reference key="1">
    <citation type="journal article" date="1992" name="Proc. Natl. Acad. Sci. U.S.A.">
        <title>Genetic characterization and transovarial transmission of a typhus-like rickettsia found in cat fleas.</title>
        <authorList>
            <person name="Azad A.F."/>
            <person name="Sacci J.B. Jr."/>
            <person name="Nelson W.M."/>
            <person name="Dasch G.A."/>
            <person name="Schmidtmann E.T."/>
            <person name="Carl M."/>
        </authorList>
    </citation>
    <scope>NUCLEOTIDE SEQUENCE [GENOMIC DNA]</scope>
</reference>